<accession>Q56425</accession>
<accession>Q5SKE1</accession>
<keyword id="KW-0963">Cytoplasm</keyword>
<keyword id="KW-1185">Reference proteome</keyword>
<keyword id="KW-0690">Ribosome biogenesis</keyword>
<feature type="chain" id="PRO_0000181945" description="Ribosome maturation factor RimP">
    <location>
        <begin position="1"/>
        <end position="157"/>
    </location>
</feature>
<feature type="sequence conflict" description="In Ref. 1; CAA88035." evidence="2" ref="1">
    <location>
        <position position="94"/>
    </location>
</feature>
<name>RIMP_THET8</name>
<sequence>MGVNPPFLCEGGGEVTVDLWQLVEEAVSPLGLDVLEVHFARGELLVRLERKDERPITVADLEEASRHIEAALDREDPIPGSYRLLVESPGPKRPLFTRRHFERFQGLKAKVPGPEGFTGRILRVEGEEVVFQVGDEERRLRIGTFRANLAEWPEEPR</sequence>
<evidence type="ECO:0000255" key="1">
    <source>
        <dbReference type="HAMAP-Rule" id="MF_01077"/>
    </source>
</evidence>
<evidence type="ECO:0000305" key="2"/>
<dbReference type="EMBL" id="Z48001">
    <property type="protein sequence ID" value="CAA88035.1"/>
    <property type="molecule type" value="Genomic_DNA"/>
</dbReference>
<dbReference type="EMBL" id="AP008226">
    <property type="protein sequence ID" value="BAD70525.1"/>
    <property type="molecule type" value="Genomic_DNA"/>
</dbReference>
<dbReference type="PIR" id="S52273">
    <property type="entry name" value="S52273"/>
</dbReference>
<dbReference type="RefSeq" id="WP_011172800.1">
    <property type="nucleotide sequence ID" value="NC_006461.1"/>
</dbReference>
<dbReference type="RefSeq" id="YP_143968.1">
    <property type="nucleotide sequence ID" value="NC_006461.1"/>
</dbReference>
<dbReference type="SMR" id="Q56425"/>
<dbReference type="EnsemblBacteria" id="BAD70525">
    <property type="protein sequence ID" value="BAD70525"/>
    <property type="gene ID" value="BAD70525"/>
</dbReference>
<dbReference type="GeneID" id="3168396"/>
<dbReference type="KEGG" id="ttj:TTHA0702"/>
<dbReference type="PATRIC" id="fig|300852.9.peg.696"/>
<dbReference type="eggNOG" id="COG0779">
    <property type="taxonomic scope" value="Bacteria"/>
</dbReference>
<dbReference type="HOGENOM" id="CLU_070525_1_1_0"/>
<dbReference type="PhylomeDB" id="Q56425"/>
<dbReference type="Proteomes" id="UP000000532">
    <property type="component" value="Chromosome"/>
</dbReference>
<dbReference type="GO" id="GO:0005829">
    <property type="term" value="C:cytosol"/>
    <property type="evidence" value="ECO:0007669"/>
    <property type="project" value="TreeGrafter"/>
</dbReference>
<dbReference type="GO" id="GO:0000028">
    <property type="term" value="P:ribosomal small subunit assembly"/>
    <property type="evidence" value="ECO:0007669"/>
    <property type="project" value="TreeGrafter"/>
</dbReference>
<dbReference type="GO" id="GO:0006412">
    <property type="term" value="P:translation"/>
    <property type="evidence" value="ECO:0007669"/>
    <property type="project" value="TreeGrafter"/>
</dbReference>
<dbReference type="Gene3D" id="3.30.300.70">
    <property type="entry name" value="RimP-like superfamily, N-terminal"/>
    <property type="match status" value="1"/>
</dbReference>
<dbReference type="HAMAP" id="MF_01077">
    <property type="entry name" value="RimP"/>
    <property type="match status" value="1"/>
</dbReference>
<dbReference type="InterPro" id="IPR003728">
    <property type="entry name" value="Ribosome_maturation_RimP"/>
</dbReference>
<dbReference type="InterPro" id="IPR028998">
    <property type="entry name" value="RimP_C"/>
</dbReference>
<dbReference type="InterPro" id="IPR036847">
    <property type="entry name" value="RimP_C_sf"/>
</dbReference>
<dbReference type="InterPro" id="IPR028989">
    <property type="entry name" value="RimP_N"/>
</dbReference>
<dbReference type="InterPro" id="IPR035956">
    <property type="entry name" value="RimP_N_sf"/>
</dbReference>
<dbReference type="NCBIfam" id="NF011239">
    <property type="entry name" value="PRK14645.1"/>
    <property type="match status" value="1"/>
</dbReference>
<dbReference type="PANTHER" id="PTHR33867">
    <property type="entry name" value="RIBOSOME MATURATION FACTOR RIMP"/>
    <property type="match status" value="1"/>
</dbReference>
<dbReference type="PANTHER" id="PTHR33867:SF1">
    <property type="entry name" value="RIBOSOME MATURATION FACTOR RIMP"/>
    <property type="match status" value="1"/>
</dbReference>
<dbReference type="Pfam" id="PF17384">
    <property type="entry name" value="DUF150_C"/>
    <property type="match status" value="1"/>
</dbReference>
<dbReference type="Pfam" id="PF02576">
    <property type="entry name" value="RimP_N"/>
    <property type="match status" value="1"/>
</dbReference>
<dbReference type="SUPFAM" id="SSF74942">
    <property type="entry name" value="YhbC-like, C-terminal domain"/>
    <property type="match status" value="1"/>
</dbReference>
<dbReference type="SUPFAM" id="SSF75420">
    <property type="entry name" value="YhbC-like, N-terminal domain"/>
    <property type="match status" value="1"/>
</dbReference>
<comment type="function">
    <text evidence="1">Required for maturation of 30S ribosomal subunits.</text>
</comment>
<comment type="subcellular location">
    <subcellularLocation>
        <location evidence="1">Cytoplasm</location>
    </subcellularLocation>
</comment>
<comment type="similarity">
    <text evidence="1">Belongs to the RimP family.</text>
</comment>
<reference key="1">
    <citation type="journal article" date="1997" name="Biochimie">
        <title>Organization of the Thermus thermophilus nusA/infB operon and overexpression of the infB gene in Escherichia coli.</title>
        <authorList>
            <person name="Vornlocher H.-P."/>
            <person name="Kreutzer R."/>
            <person name="Sprinzl M."/>
        </authorList>
    </citation>
    <scope>NUCLEOTIDE SEQUENCE [GENOMIC DNA]</scope>
</reference>
<reference key="2">
    <citation type="submission" date="2004-11" db="EMBL/GenBank/DDBJ databases">
        <title>Complete genome sequence of Thermus thermophilus HB8.</title>
        <authorList>
            <person name="Masui R."/>
            <person name="Kurokawa K."/>
            <person name="Nakagawa N."/>
            <person name="Tokunaga F."/>
            <person name="Koyama Y."/>
            <person name="Shibata T."/>
            <person name="Oshima T."/>
            <person name="Yokoyama S."/>
            <person name="Yasunaga T."/>
            <person name="Kuramitsu S."/>
        </authorList>
    </citation>
    <scope>NUCLEOTIDE SEQUENCE [LARGE SCALE GENOMIC DNA]</scope>
    <source>
        <strain>ATCC 27634 / DSM 579 / HB8</strain>
    </source>
</reference>
<organism>
    <name type="scientific">Thermus thermophilus (strain ATCC 27634 / DSM 579 / HB8)</name>
    <dbReference type="NCBI Taxonomy" id="300852"/>
    <lineage>
        <taxon>Bacteria</taxon>
        <taxon>Thermotogati</taxon>
        <taxon>Deinococcota</taxon>
        <taxon>Deinococci</taxon>
        <taxon>Thermales</taxon>
        <taxon>Thermaceae</taxon>
        <taxon>Thermus</taxon>
    </lineage>
</organism>
<gene>
    <name evidence="1" type="primary">rimP</name>
    <name type="ordered locus">TTHA0702</name>
</gene>
<protein>
    <recommendedName>
        <fullName evidence="1">Ribosome maturation factor RimP</fullName>
    </recommendedName>
</protein>
<proteinExistence type="inferred from homology"/>